<sequence>MVQSDTSKSPPIAAVAQESQMELLESAAPAGALGAQSYGKGARRKNRFKGSDDSTSSDTTSNSFVRQGSADSYTSRPSDSDVSLEEDREAVRREAERQAQAQLEKAKTKPVAFAVRTNVRYSAAQEDDVPVPGMAISFEAKDFLHVKEKFNNDWWIGRLVKEGCEIGFIPSPVKLENMRLQHEQRAKQGKFYSSKSGGNSSSSLGDIVPSSRKSTPPSSAIDIDATGLDAEENDIPANHRSPKPSANSVTSPHSKEKRMPFFKKTEHTPPYDVVPSMRPVVLVGPSLKGYEVTDMMQKALFDFLKHRFEGRISITRVTADISLAKRSVLNNPSKHAIIERSNTRSSLAEVQSEIERIFELARTLQLVVLDADTINHPAQLSKTSLAPIIVYVKISSPKVLQRLIKSRGKSQAKHLNVQMVAADKLAQCPPQESFDVILDENQLEDACEHLADYLEAYWKATHPPSSNLPNPLLSRTLATSTLPLSPTLASNSQGSQGDQRTDRSAPRSASQAEEEPCLEPVKKSQHRSSSATHQNHRSGTGRGLSRQETFDSETQESRDSAYVEPKEDYSHEHVDRYVPHREHNHREESHSSNGHRHREPRHRTRDMGRDQDHNECSKQRSRHKSKDRYCDKEGEVISKRRSEAGEWNRDVYIRQ</sequence>
<gene>
    <name type="primary">Cacnb2</name>
    <name type="synonym">Cacnlb2</name>
</gene>
<feature type="chain" id="PRO_0000144054" description="Voltage-dependent L-type calcium channel subunit beta-2">
    <location>
        <begin position="1"/>
        <end position="655"/>
    </location>
</feature>
<feature type="domain" description="SH3" evidence="3">
    <location>
        <begin position="110"/>
        <end position="179"/>
    </location>
</feature>
<feature type="region of interest" description="Disordered" evidence="4">
    <location>
        <begin position="34"/>
        <end position="107"/>
    </location>
</feature>
<feature type="region of interest" description="Disordered" evidence="4">
    <location>
        <begin position="186"/>
        <end position="257"/>
    </location>
</feature>
<feature type="region of interest" description="Disordered" evidence="4">
    <location>
        <begin position="483"/>
        <end position="632"/>
    </location>
</feature>
<feature type="compositionally biased region" description="Polar residues" evidence="4">
    <location>
        <begin position="62"/>
        <end position="81"/>
    </location>
</feature>
<feature type="compositionally biased region" description="Low complexity" evidence="4">
    <location>
        <begin position="193"/>
        <end position="205"/>
    </location>
</feature>
<feature type="compositionally biased region" description="Basic and acidic residues" evidence="4">
    <location>
        <begin position="555"/>
        <end position="590"/>
    </location>
</feature>
<feature type="compositionally biased region" description="Basic residues" evidence="4">
    <location>
        <begin position="593"/>
        <end position="604"/>
    </location>
</feature>
<feature type="compositionally biased region" description="Basic and acidic residues" evidence="4">
    <location>
        <begin position="605"/>
        <end position="618"/>
    </location>
</feature>
<feature type="site" description="Required for CaMK2D-binding">
    <location>
        <position position="544"/>
    </location>
</feature>
<feature type="modified residue" description="Phosphoserine" evidence="18">
    <location>
        <position position="200"/>
    </location>
</feature>
<feature type="modified residue" description="Phosphoserine" evidence="18">
    <location>
        <position position="203"/>
    </location>
</feature>
<feature type="modified residue" description="Phosphoserine" evidence="2">
    <location>
        <position position="214"/>
    </location>
</feature>
<feature type="modified residue" description="Phosphoserine" evidence="2">
    <location>
        <position position="545"/>
    </location>
</feature>
<feature type="modified residue" description="Phosphothreonine; by CaMK2D" evidence="9">
    <location>
        <position position="549"/>
    </location>
</feature>
<feature type="splice variant" id="VSP_010734" description="In isoform 2." evidence="13">
    <original>MVQSDTSKSPPIAAVAQESQMELLESAAPAGALGAQSYGKGARRKNRFKGSDDSTSSDTTSNSFVRQ</original>
    <variation>MQCCGLVHRRRVRVSR</variation>
    <location>
        <begin position="1"/>
        <end position="67"/>
    </location>
</feature>
<feature type="splice variant" id="VSP_010735" description="In isoform 4." evidence="12">
    <original>MVQSDTSKSPPIAAVAQESQMELLESAAPAGALGAQSYGKGARRKNRFKGSDDSTSSDTTSNSFVRQ</original>
    <variation>MKATWIRLLKRAKGERLKDSDIC</variation>
    <location>
        <begin position="1"/>
        <end position="67"/>
    </location>
</feature>
<feature type="splice variant" id="VSP_010736" description="In isoform 5." evidence="12">
    <original>MVQSDTSKSPPIAAVAQESQMELLESAAPAGALGAQSYGKGARRKNRFKGSDDSTSSDTTSNSFVRQ</original>
    <variation>MLDRQLVSSQTQSSIPG</variation>
    <location>
        <begin position="1"/>
        <end position="67"/>
    </location>
</feature>
<feature type="splice variant" id="VSP_010733" description="In isoform 3." evidence="12">
    <original>MVQSDTSKSPPIAAVAQESQMELLESAAPAGALGAQ</original>
    <variation>MDQASGLDRLKI</variation>
    <location>
        <begin position="1"/>
        <end position="36"/>
    </location>
</feature>
<feature type="sequence conflict" description="In Ref. 3; AAO38996." evidence="14" ref="3">
    <original>D</original>
    <variation>G</variation>
    <location>
        <position position="53"/>
    </location>
</feature>
<feature type="helix" evidence="19">
    <location>
        <begin position="91"/>
        <end position="106"/>
    </location>
</feature>
<feature type="strand" evidence="19">
    <location>
        <begin position="113"/>
        <end position="119"/>
    </location>
</feature>
<feature type="helix" evidence="19">
    <location>
        <begin position="125"/>
        <end position="127"/>
    </location>
</feature>
<feature type="strand" evidence="19">
    <location>
        <begin position="143"/>
        <end position="151"/>
    </location>
</feature>
<feature type="strand" evidence="19">
    <location>
        <begin position="154"/>
        <end position="161"/>
    </location>
</feature>
<feature type="strand" evidence="19">
    <location>
        <begin position="167"/>
        <end position="170"/>
    </location>
</feature>
<feature type="helix" evidence="19">
    <location>
        <begin position="172"/>
        <end position="186"/>
    </location>
</feature>
<feature type="strand" evidence="19">
    <location>
        <begin position="270"/>
        <end position="274"/>
    </location>
</feature>
<feature type="strand" evidence="19">
    <location>
        <begin position="280"/>
        <end position="283"/>
    </location>
</feature>
<feature type="helix" evidence="19">
    <location>
        <begin position="291"/>
        <end position="307"/>
    </location>
</feature>
<feature type="turn" evidence="19">
    <location>
        <begin position="308"/>
        <end position="310"/>
    </location>
</feature>
<feature type="strand" evidence="19">
    <location>
        <begin position="311"/>
        <end position="317"/>
    </location>
</feature>
<feature type="helix" evidence="19">
    <location>
        <begin position="321"/>
        <end position="323"/>
    </location>
</feature>
<feature type="helix" evidence="19">
    <location>
        <begin position="344"/>
        <end position="361"/>
    </location>
</feature>
<feature type="strand" evidence="19">
    <location>
        <begin position="366"/>
        <end position="371"/>
    </location>
</feature>
<feature type="helix" evidence="19">
    <location>
        <begin position="377"/>
        <end position="379"/>
    </location>
</feature>
<feature type="turn" evidence="19">
    <location>
        <begin position="380"/>
        <end position="382"/>
    </location>
</feature>
<feature type="strand" evidence="19">
    <location>
        <begin position="388"/>
        <end position="392"/>
    </location>
</feature>
<feature type="helix" evidence="19">
    <location>
        <begin position="397"/>
        <end position="406"/>
    </location>
</feature>
<feature type="helix" evidence="19">
    <location>
        <begin position="409"/>
        <end position="412"/>
    </location>
</feature>
<feature type="helix" evidence="19">
    <location>
        <begin position="415"/>
        <end position="427"/>
    </location>
</feature>
<feature type="helix" evidence="19">
    <location>
        <begin position="430"/>
        <end position="433"/>
    </location>
</feature>
<feature type="strand" evidence="19">
    <location>
        <begin position="435"/>
        <end position="438"/>
    </location>
</feature>
<feature type="helix" evidence="19">
    <location>
        <begin position="443"/>
        <end position="461"/>
    </location>
</feature>
<feature type="helix" evidence="19">
    <location>
        <begin position="464"/>
        <end position="466"/>
    </location>
</feature>
<keyword id="KW-0002">3D-structure</keyword>
<keyword id="KW-0025">Alternative splicing</keyword>
<keyword id="KW-0106">Calcium</keyword>
<keyword id="KW-0107">Calcium channel</keyword>
<keyword id="KW-0109">Calcium transport</keyword>
<keyword id="KW-1003">Cell membrane</keyword>
<keyword id="KW-0407">Ion channel</keyword>
<keyword id="KW-0406">Ion transport</keyword>
<keyword id="KW-0472">Membrane</keyword>
<keyword id="KW-0597">Phosphoprotein</keyword>
<keyword id="KW-1185">Reference proteome</keyword>
<keyword id="KW-0728">SH3 domain</keyword>
<keyword id="KW-0813">Transport</keyword>
<keyword id="KW-0851">Voltage-gated channel</keyword>
<reference key="1">
    <citation type="journal article" date="1992" name="J. Biol. Chem.">
        <title>Cloning and expression of a cardiac/brain beta subunit of the L-type calcium channel.</title>
        <authorList>
            <person name="Perez-Reyes E."/>
            <person name="Castellano A."/>
            <person name="Kim H.S."/>
            <person name="Bertrand P."/>
            <person name="Baggstrom E."/>
            <person name="Lacerda A.E."/>
            <person name="Wei X.Y."/>
            <person name="Birnbaumer L."/>
        </authorList>
    </citation>
    <scope>NUCLEOTIDE SEQUENCE [MRNA] (ISOFORM 2)</scope>
    <scope>FUNCTION</scope>
    <scope>TISSUE SPECIFICITY</scope>
    <scope>ALTERNATIVE SPLICING</scope>
    <source>
        <tissue>Brain</tissue>
    </source>
</reference>
<reference key="2">
    <citation type="journal article" date="2001" name="J. Biol. Chem.">
        <title>Cloning of a functional splice variant of L-type calcium channel beta2 subunit from rat heart.</title>
        <authorList>
            <person name="Yamada Y."/>
            <person name="Nagashima M."/>
            <person name="Tsutsuura M."/>
            <person name="Kobayashi T."/>
            <person name="Seki S."/>
            <person name="Makita N."/>
            <person name="Horio Y."/>
            <person name="Tohse N."/>
        </authorList>
    </citation>
    <scope>NUCLEOTIDE SEQUENCE [MRNA] (ISOFORM 1)</scope>
    <scope>FUNCTION</scope>
    <scope>TISSUE SPECIFICITY</scope>
    <scope>ALTERNATIVE SPLICING</scope>
    <source>
        <strain>Wistar</strain>
        <tissue>Heart</tissue>
    </source>
</reference>
<reference key="3">
    <citation type="journal article" date="2002" name="J. Physiol. (Lond.)">
        <title>Novel functional properties of Ca(2+) channel beta subunits revealed by their expression in adult rat heart cells.</title>
        <authorList>
            <person name="Colecraft H.M."/>
            <person name="Alseikhan B."/>
            <person name="Takahashi S.X."/>
            <person name="Chaudhuri D."/>
            <person name="Mittman S."/>
            <person name="Yegnasubramanian V."/>
            <person name="Alvania R.S."/>
            <person name="Johns D.C."/>
            <person name="Marban E."/>
            <person name="Yue D.T."/>
        </authorList>
    </citation>
    <scope>NUCLEOTIDE SEQUENCE [MRNA] (ISOFORMS 3; 4 AND 5)</scope>
    <scope>FUNCTION</scope>
    <scope>SUBCELLULAR LOCATION</scope>
    <source>
        <strain>Sprague-Dawley</strain>
        <tissue>Heart</tissue>
    </source>
</reference>
<reference key="4">
    <citation type="journal article" date="2010" name="Proc. Natl. Acad. Sci. U.S.A.">
        <title>CaV1.2 beta-subunit coordinates CaMKII-triggered cardiomyocyte death and afterdepolarizations.</title>
        <authorList>
            <person name="Koval O.M."/>
            <person name="Guan X."/>
            <person name="Wu Y."/>
            <person name="Joiner M.L."/>
            <person name="Gao Z."/>
            <person name="Chen B."/>
            <person name="Grumbach I.M."/>
            <person name="Luczak E.D."/>
            <person name="Colbran R.J."/>
            <person name="Song L.S."/>
            <person name="Hund T.J."/>
            <person name="Mohler P.J."/>
            <person name="Anderson M.E."/>
        </authorList>
    </citation>
    <scope>INTERACTION WITH CAMK2D</scope>
    <scope>PHOSPHORYLATION AT THR-549 BY CAMK2D</scope>
</reference>
<reference key="5">
    <citation type="journal article" date="2012" name="Nat. Commun.">
        <title>Quantitative maps of protein phosphorylation sites across 14 different rat organs and tissues.</title>
        <authorList>
            <person name="Lundby A."/>
            <person name="Secher A."/>
            <person name="Lage K."/>
            <person name="Nordsborg N.B."/>
            <person name="Dmytriyev A."/>
            <person name="Lundby C."/>
            <person name="Olsen J.V."/>
        </authorList>
    </citation>
    <scope>PHOSPHORYLATION [LARGE SCALE ANALYSIS] AT SER-200 AND SER-203</scope>
    <scope>IDENTIFICATION BY MASS SPECTROMETRY [LARGE SCALE ANALYSIS]</scope>
</reference>
<reference key="6">
    <citation type="journal article" date="2014" name="J. Cell Biol.">
        <title>BARP suppresses voltage-gated calcium channel activity and Ca2+-evoked exocytosis.</title>
        <authorList>
            <person name="Beguin P."/>
            <person name="Nagashima K."/>
            <person name="Mahalakshmi R.N."/>
            <person name="Vigot R."/>
            <person name="Matsunaga A."/>
            <person name="Miki T."/>
            <person name="Ng M.Y."/>
            <person name="Ng Y.J."/>
            <person name="Lim C.H."/>
            <person name="Tay H.S."/>
            <person name="Hwang L.A."/>
            <person name="Firsov D."/>
            <person name="Tang B.L."/>
            <person name="Inagaki N."/>
            <person name="Mori Y."/>
            <person name="Seino S."/>
            <person name="Launey T."/>
            <person name="Hunziker W."/>
        </authorList>
    </citation>
    <scope>INTERACTION WITH CBARP</scope>
</reference>
<reference evidence="15 16" key="7">
    <citation type="journal article" date="2004" name="Nature">
        <title>Structure of a complex between a voltage-gated calcium channel beta-subunit and an alpha-subunit domain.</title>
        <authorList>
            <person name="Van Petegem F."/>
            <person name="Clark K.A."/>
            <person name="Chatelain F.C."/>
            <person name="Minor D.L. Jr."/>
        </authorList>
    </citation>
    <scope>X-RAY CRYSTALLOGRAPHY (1.97 ANGSTROMS) OF 68-476 IN COMPLEX WITH CACNA1C</scope>
</reference>
<reference evidence="17" key="8">
    <citation type="journal article" date="2015" name="Science">
        <title>Structure of the voltage-gated calcium channel Cav1.1 complex.</title>
        <authorList>
            <person name="Wu J."/>
            <person name="Yan Z."/>
            <person name="Li Z."/>
            <person name="Yan C."/>
            <person name="Lu S."/>
            <person name="Dong M."/>
            <person name="Yan N."/>
        </authorList>
    </citation>
    <scope>STRUCTURE BY ELECTRON MICROSCOPY (4.20 ANGSTROMS) OF 68-475 IN COMPLEX WITH CACNA1S; CACNG1 AND CACNA2D1</scope>
    <scope>SUBUNIT</scope>
</reference>
<accession>Q8VGC3</accession>
<accession>Q811Q6</accession>
<accession>Q811Q7</accession>
<accession>Q91ZJ8</accession>
<accession>Q9QUU7</accession>
<comment type="function">
    <text evidence="1 2 5 6 7">Beta subunit of voltage-dependent calcium channels which contributes to the function of the calcium channel by increasing peak calcium current (PubMed:12042350, PubMed:1370480). Plays a role in shifting voltage dependencies of activation and inactivation of the channel (PubMed:12042350, PubMed:1370480). May modulate G protein inhibition (PubMed:11604404, PubMed:12042350, PubMed:1370480). May contribute to beta-adrenergic augmentation of Ca(2+) influx in cardiomyocytes, thereby regulating increases in heart rate and contractile force (By similarity). Involved in membrane targeting of the alpha-1 subunit CACNA1C (By similarity).</text>
</comment>
<comment type="subunit">
    <text evidence="1 8 9 10 11">Component of a calcium channel complex consisting of a pore-forming alpha subunit (CACNA1S) and the ancillary subunits CACNB1 or CACNB2, CACNG1 and CACNA2D1 (PubMed:26680202). The channel complex contains alpha, beta, gamma and delta subunits in a 1:1:1:1 ratio, i.e. it contains either CACNB1 or CACNB2 (PubMed:26680202). Interacts with CACNA1C (PubMed:15141227). Interacts with RRAD; interaction may be involved in beta-adrenergic regulation of heart rate and contractile force (By similarity). Interaction with RRAD regulates the trafficking of CACNA1C to the cell membrane (By similarity). Interacts with TMIGD2 (By similarity). Interacts with CAMK2D (PubMed:20194790). Interacts with CBARP (PubMed:24751537). Interacts with CAMK2A (By similarity).</text>
</comment>
<comment type="interaction">
    <interactant intactId="EBI-15685453">
        <id>Q8VGC3-2</id>
    </interactant>
    <interactant intactId="EBI-15685453">
        <id>Q8VGC3-2</id>
        <label>Cacnb2</label>
    </interactant>
    <organismsDiffer>false</organismsDiffer>
    <experiments>2</experiments>
</comment>
<comment type="subcellular location">
    <subcellularLocation>
        <location evidence="6">Cell membrane</location>
        <location evidence="6">Sarcolemma</location>
        <topology evidence="6">Peripheral membrane protein</topology>
        <orientation evidence="6">Cytoplasmic side</orientation>
    </subcellularLocation>
</comment>
<comment type="alternative products">
    <event type="alternative splicing"/>
    <isoform>
        <id>Q8VGC3-1</id>
        <name>1</name>
        <sequence type="displayed"/>
    </isoform>
    <isoform>
        <id>Q8VGC3-2</id>
        <name>2</name>
        <sequence type="described" ref="VSP_010734"/>
    </isoform>
    <isoform>
        <id>Q8VGC3-3</id>
        <name>3</name>
        <name>Beta-2c</name>
        <sequence type="described" ref="VSP_010733"/>
    </isoform>
    <isoform>
        <id>Q8VGC3-4</id>
        <name>4</name>
        <name>Beta-2e</name>
        <sequence type="described" ref="VSP_010735"/>
    </isoform>
    <isoform>
        <id>Q8VGC3-5</id>
        <name>5</name>
        <name>Beta-2b</name>
        <sequence type="described" ref="VSP_010736"/>
    </isoform>
</comment>
<comment type="tissue specificity">
    <text evidence="5 7">Highly expressed in heart and brain, and at lower levels in lung.</text>
</comment>
<comment type="PTM">
    <text evidence="9">Regulated through phosphorylation at Thr-549 by CaMK2D.</text>
</comment>
<comment type="similarity">
    <text evidence="14">Belongs to the calcium channel beta subunit family.</text>
</comment>
<evidence type="ECO:0000250" key="1">
    <source>
        <dbReference type="UniProtKB" id="Q08289"/>
    </source>
</evidence>
<evidence type="ECO:0000250" key="2">
    <source>
        <dbReference type="UniProtKB" id="Q8CC27"/>
    </source>
</evidence>
<evidence type="ECO:0000255" key="3">
    <source>
        <dbReference type="PROSITE-ProRule" id="PRU00192"/>
    </source>
</evidence>
<evidence type="ECO:0000256" key="4">
    <source>
        <dbReference type="SAM" id="MobiDB-lite"/>
    </source>
</evidence>
<evidence type="ECO:0000269" key="5">
    <source>
    </source>
</evidence>
<evidence type="ECO:0000269" key="6">
    <source>
    </source>
</evidence>
<evidence type="ECO:0000269" key="7">
    <source>
    </source>
</evidence>
<evidence type="ECO:0000269" key="8">
    <source>
    </source>
</evidence>
<evidence type="ECO:0000269" key="9">
    <source>
    </source>
</evidence>
<evidence type="ECO:0000269" key="10">
    <source>
    </source>
</evidence>
<evidence type="ECO:0000269" key="11">
    <source>
    </source>
</evidence>
<evidence type="ECO:0000303" key="12">
    <source>
    </source>
</evidence>
<evidence type="ECO:0000303" key="13">
    <source>
    </source>
</evidence>
<evidence type="ECO:0000305" key="14"/>
<evidence type="ECO:0007744" key="15">
    <source>
        <dbReference type="PDB" id="1T0H"/>
    </source>
</evidence>
<evidence type="ECO:0007744" key="16">
    <source>
        <dbReference type="PDB" id="1T0J"/>
    </source>
</evidence>
<evidence type="ECO:0007744" key="17">
    <source>
        <dbReference type="PDB" id="3JBR"/>
    </source>
</evidence>
<evidence type="ECO:0007744" key="18">
    <source>
    </source>
</evidence>
<evidence type="ECO:0007829" key="19">
    <source>
        <dbReference type="PDB" id="5V2Q"/>
    </source>
</evidence>
<name>CACB2_RAT</name>
<proteinExistence type="evidence at protein level"/>
<dbReference type="EMBL" id="AF394941">
    <property type="protein sequence ID" value="AAL47074.1"/>
    <property type="molecule type" value="mRNA"/>
</dbReference>
<dbReference type="EMBL" id="M80545">
    <property type="protein sequence ID" value="AAK14821.1"/>
    <property type="molecule type" value="mRNA"/>
</dbReference>
<dbReference type="EMBL" id="AF423193">
    <property type="protein sequence ID" value="AAL16952.1"/>
    <property type="molecule type" value="mRNA"/>
</dbReference>
<dbReference type="EMBL" id="AY190119">
    <property type="protein sequence ID" value="AAO38996.1"/>
    <property type="molecule type" value="mRNA"/>
</dbReference>
<dbReference type="EMBL" id="AY190120">
    <property type="protein sequence ID" value="AAO38997.1"/>
    <property type="molecule type" value="mRNA"/>
</dbReference>
<dbReference type="PIR" id="A42044">
    <property type="entry name" value="A42044"/>
</dbReference>
<dbReference type="RefSeq" id="NP_446303.1">
    <property type="nucleotide sequence ID" value="NM_053851.1"/>
</dbReference>
<dbReference type="RefSeq" id="XP_006254360.1">
    <property type="nucleotide sequence ID" value="XM_006254298.3"/>
</dbReference>
<dbReference type="RefSeq" id="XP_006254365.1">
    <molecule id="Q8VGC3-5"/>
    <property type="nucleotide sequence ID" value="XM_006254303.5"/>
</dbReference>
<dbReference type="PDB" id="1T0H">
    <property type="method" value="X-ray"/>
    <property type="resolution" value="1.97 A"/>
    <property type="chains" value="A=68-196, B=254-476"/>
</dbReference>
<dbReference type="PDB" id="1T0J">
    <property type="method" value="X-ray"/>
    <property type="resolution" value="2.00 A"/>
    <property type="chains" value="A=68-196, B=254-476"/>
</dbReference>
<dbReference type="PDB" id="3JBR">
    <property type="method" value="EM"/>
    <property type="resolution" value="4.20 A"/>
    <property type="chains" value="B=68-196, B=254-475"/>
</dbReference>
<dbReference type="PDB" id="5V2P">
    <property type="method" value="X-ray"/>
    <property type="resolution" value="2.00 A"/>
    <property type="chains" value="A=68-189, A=254-476"/>
</dbReference>
<dbReference type="PDB" id="5V2Q">
    <property type="method" value="X-ray"/>
    <property type="resolution" value="1.70 A"/>
    <property type="chains" value="A=68-189, A=254-476"/>
</dbReference>
<dbReference type="PDBsum" id="1T0H"/>
<dbReference type="PDBsum" id="1T0J"/>
<dbReference type="PDBsum" id="3JBR"/>
<dbReference type="PDBsum" id="5V2P"/>
<dbReference type="PDBsum" id="5V2Q"/>
<dbReference type="SMR" id="Q8VGC3"/>
<dbReference type="DIP" id="DIP-29590N"/>
<dbReference type="FunCoup" id="Q8VGC3">
    <property type="interactions" value="3252"/>
</dbReference>
<dbReference type="IntAct" id="Q8VGC3">
    <property type="interactions" value="5"/>
</dbReference>
<dbReference type="MINT" id="Q8VGC3"/>
<dbReference type="STRING" id="10116.ENSRNOP00000037354"/>
<dbReference type="CarbonylDB" id="Q8VGC3"/>
<dbReference type="iPTMnet" id="Q8VGC3"/>
<dbReference type="PhosphoSitePlus" id="Q8VGC3"/>
<dbReference type="SwissPalm" id="Q8VGC3"/>
<dbReference type="PaxDb" id="10116-ENSRNOP00000037354"/>
<dbReference type="ABCD" id="Q8VGC3">
    <property type="antibodies" value="1 sequenced antibody"/>
</dbReference>
<dbReference type="Ensembl" id="ENSRNOT00000066826.4">
    <molecule id="Q8VGC3-5"/>
    <property type="protein sequence ID" value="ENSRNOP00000063474.2"/>
    <property type="gene ID" value="ENSRNOG00000018378.9"/>
</dbReference>
<dbReference type="GeneID" id="116600"/>
<dbReference type="KEGG" id="rno:116600"/>
<dbReference type="UCSC" id="RGD:67385">
    <molecule id="Q8VGC3-1"/>
    <property type="organism name" value="rat"/>
</dbReference>
<dbReference type="AGR" id="RGD:67385"/>
<dbReference type="CTD" id="783"/>
<dbReference type="RGD" id="67385">
    <property type="gene designation" value="Cacnb2"/>
</dbReference>
<dbReference type="eggNOG" id="KOG3812">
    <property type="taxonomic scope" value="Eukaryota"/>
</dbReference>
<dbReference type="GeneTree" id="ENSGT00950000182837"/>
<dbReference type="InParanoid" id="Q8VGC3"/>
<dbReference type="PhylomeDB" id="Q8VGC3"/>
<dbReference type="BRENDA" id="2.7.4.8">
    <property type="organism ID" value="5301"/>
</dbReference>
<dbReference type="Reactome" id="R-RNO-112308">
    <property type="pathway name" value="Presynaptic depolarization and calcium channel opening"/>
</dbReference>
<dbReference type="Reactome" id="R-RNO-422356">
    <property type="pathway name" value="Regulation of insulin secretion"/>
</dbReference>
<dbReference type="Reactome" id="R-RNO-5576892">
    <property type="pathway name" value="Phase 0 - rapid depolarisation"/>
</dbReference>
<dbReference type="Reactome" id="R-RNO-5576893">
    <property type="pathway name" value="Phase 2 - plateau phase"/>
</dbReference>
<dbReference type="EvolutionaryTrace" id="Q8VGC3"/>
<dbReference type="PRO" id="PR:Q8VGC3"/>
<dbReference type="Proteomes" id="UP000002494">
    <property type="component" value="Chromosome 17"/>
</dbReference>
<dbReference type="GO" id="GO:1990454">
    <property type="term" value="C:L-type voltage-gated calcium channel complex"/>
    <property type="evidence" value="ECO:0000314"/>
    <property type="project" value="UniProtKB"/>
</dbReference>
<dbReference type="GO" id="GO:0098684">
    <property type="term" value="C:photoreceptor ribbon synapse"/>
    <property type="evidence" value="ECO:0000266"/>
    <property type="project" value="RGD"/>
</dbReference>
<dbReference type="GO" id="GO:0098793">
    <property type="term" value="C:presynapse"/>
    <property type="evidence" value="ECO:0007669"/>
    <property type="project" value="GOC"/>
</dbReference>
<dbReference type="GO" id="GO:0005891">
    <property type="term" value="C:voltage-gated calcium channel complex"/>
    <property type="evidence" value="ECO:0000314"/>
    <property type="project" value="RGD"/>
</dbReference>
<dbReference type="GO" id="GO:0051015">
    <property type="term" value="F:actin filament binding"/>
    <property type="evidence" value="ECO:0000314"/>
    <property type="project" value="BHF-UCL"/>
</dbReference>
<dbReference type="GO" id="GO:0005246">
    <property type="term" value="F:calcium channel regulator activity"/>
    <property type="evidence" value="ECO:0000314"/>
    <property type="project" value="RGD"/>
</dbReference>
<dbReference type="GO" id="GO:0008331">
    <property type="term" value="F:high voltage-gated calcium channel activity"/>
    <property type="evidence" value="ECO:0000318"/>
    <property type="project" value="GO_Central"/>
</dbReference>
<dbReference type="GO" id="GO:0042802">
    <property type="term" value="F:identical protein binding"/>
    <property type="evidence" value="ECO:0000353"/>
    <property type="project" value="IntAct"/>
</dbReference>
<dbReference type="GO" id="GO:0051219">
    <property type="term" value="F:phosphoprotein binding"/>
    <property type="evidence" value="ECO:0000353"/>
    <property type="project" value="RGD"/>
</dbReference>
<dbReference type="GO" id="GO:0019904">
    <property type="term" value="F:protein domain specific binding"/>
    <property type="evidence" value="ECO:0000353"/>
    <property type="project" value="RGD"/>
</dbReference>
<dbReference type="GO" id="GO:0019901">
    <property type="term" value="F:protein kinase binding"/>
    <property type="evidence" value="ECO:0000314"/>
    <property type="project" value="RGD"/>
</dbReference>
<dbReference type="GO" id="GO:0005245">
    <property type="term" value="F:voltage-gated calcium channel activity"/>
    <property type="evidence" value="ECO:0000266"/>
    <property type="project" value="RGD"/>
</dbReference>
<dbReference type="GO" id="GO:0099626">
    <property type="term" value="F:voltage-gated calcium channel activity involved in regulation of presynaptic cytosolic calcium levels"/>
    <property type="evidence" value="ECO:0000266"/>
    <property type="project" value="RGD"/>
</dbReference>
<dbReference type="GO" id="GO:0070509">
    <property type="term" value="P:calcium ion import"/>
    <property type="evidence" value="ECO:0000266"/>
    <property type="project" value="RGD"/>
</dbReference>
<dbReference type="GO" id="GO:0006816">
    <property type="term" value="P:calcium ion transport"/>
    <property type="evidence" value="ECO:0000318"/>
    <property type="project" value="GO_Central"/>
</dbReference>
<dbReference type="GO" id="GO:0007268">
    <property type="term" value="P:chemical synaptic transmission"/>
    <property type="evidence" value="ECO:0000266"/>
    <property type="project" value="RGD"/>
</dbReference>
<dbReference type="GO" id="GO:0098912">
    <property type="term" value="P:membrane depolarization during atrial cardiac muscle cell action potential"/>
    <property type="evidence" value="ECO:0000250"/>
    <property type="project" value="BHF-UCL"/>
</dbReference>
<dbReference type="GO" id="GO:0086045">
    <property type="term" value="P:membrane depolarization during AV node cell action potential"/>
    <property type="evidence" value="ECO:0000250"/>
    <property type="project" value="BHF-UCL"/>
</dbReference>
<dbReference type="GO" id="GO:1904879">
    <property type="term" value="P:positive regulation of calcium ion transmembrane transport via high voltage-gated calcium channel"/>
    <property type="evidence" value="ECO:0000314"/>
    <property type="project" value="BHF-UCL"/>
</dbReference>
<dbReference type="GO" id="GO:0051928">
    <property type="term" value="P:positive regulation of calcium ion transport"/>
    <property type="evidence" value="ECO:0000266"/>
    <property type="project" value="RGD"/>
</dbReference>
<dbReference type="GO" id="GO:0072659">
    <property type="term" value="P:protein localization to plasma membrane"/>
    <property type="evidence" value="ECO:0000314"/>
    <property type="project" value="BHF-UCL"/>
</dbReference>
<dbReference type="GO" id="GO:0086091">
    <property type="term" value="P:regulation of heart rate by cardiac conduction"/>
    <property type="evidence" value="ECO:0000250"/>
    <property type="project" value="BHF-UCL"/>
</dbReference>
<dbReference type="GO" id="GO:0007601">
    <property type="term" value="P:visual perception"/>
    <property type="evidence" value="ECO:0000266"/>
    <property type="project" value="RGD"/>
</dbReference>
<dbReference type="CDD" id="cd12040">
    <property type="entry name" value="SH3_CACNB2"/>
    <property type="match status" value="1"/>
</dbReference>
<dbReference type="FunFam" id="2.30.30.40:FF:000015">
    <property type="entry name" value="Voltage-dependent L-type calcium channel subunit beta-2"/>
    <property type="match status" value="1"/>
</dbReference>
<dbReference type="FunFam" id="3.40.50.300:FF:000023">
    <property type="entry name" value="Voltage-dependent L-type calcium channel subunit beta-2"/>
    <property type="match status" value="1"/>
</dbReference>
<dbReference type="Gene3D" id="3.40.50.300">
    <property type="entry name" value="P-loop containing nucleotide triphosphate hydrolases"/>
    <property type="match status" value="1"/>
</dbReference>
<dbReference type="Gene3D" id="2.30.30.40">
    <property type="entry name" value="SH3 Domains"/>
    <property type="match status" value="1"/>
</dbReference>
<dbReference type="InterPro" id="IPR046937">
    <property type="entry name" value="CAB1-4_N_A-dom"/>
</dbReference>
<dbReference type="InterPro" id="IPR035605">
    <property type="entry name" value="CACNB2_SH3"/>
</dbReference>
<dbReference type="InterPro" id="IPR008145">
    <property type="entry name" value="GK/Ca_channel_bsu"/>
</dbReference>
<dbReference type="InterPro" id="IPR027417">
    <property type="entry name" value="P-loop_NTPase"/>
</dbReference>
<dbReference type="InterPro" id="IPR036028">
    <property type="entry name" value="SH3-like_dom_sf"/>
</dbReference>
<dbReference type="InterPro" id="IPR001452">
    <property type="entry name" value="SH3_domain"/>
</dbReference>
<dbReference type="InterPro" id="IPR005444">
    <property type="entry name" value="VDCC_L_b2su"/>
</dbReference>
<dbReference type="InterPro" id="IPR000584">
    <property type="entry name" value="VDCC_L_bsu"/>
</dbReference>
<dbReference type="PANTHER" id="PTHR11824">
    <property type="entry name" value="VOLTAGE-DEPENDENT CALCIUM CHANNEL BETA SUBUNIT"/>
    <property type="match status" value="1"/>
</dbReference>
<dbReference type="Pfam" id="PF00625">
    <property type="entry name" value="Guanylate_kin"/>
    <property type="match status" value="1"/>
</dbReference>
<dbReference type="Pfam" id="PF12052">
    <property type="entry name" value="VGCC_beta4Aa_N"/>
    <property type="match status" value="1"/>
</dbReference>
<dbReference type="PRINTS" id="PR01626">
    <property type="entry name" value="LCACHANNELB"/>
</dbReference>
<dbReference type="PRINTS" id="PR01628">
    <property type="entry name" value="LCACHANNELB2"/>
</dbReference>
<dbReference type="SMART" id="SM00072">
    <property type="entry name" value="GuKc"/>
    <property type="match status" value="1"/>
</dbReference>
<dbReference type="SUPFAM" id="SSF52540">
    <property type="entry name" value="P-loop containing nucleoside triphosphate hydrolases"/>
    <property type="match status" value="1"/>
</dbReference>
<dbReference type="SUPFAM" id="SSF50044">
    <property type="entry name" value="SH3-domain"/>
    <property type="match status" value="1"/>
</dbReference>
<dbReference type="PROSITE" id="PS50002">
    <property type="entry name" value="SH3"/>
    <property type="match status" value="1"/>
</dbReference>
<protein>
    <recommendedName>
        <fullName>Voltage-dependent L-type calcium channel subunit beta-2</fullName>
        <shortName>CAB2</shortName>
    </recommendedName>
    <alternativeName>
        <fullName>Calcium channel voltage-dependent subunit beta 2</fullName>
    </alternativeName>
</protein>
<organism>
    <name type="scientific">Rattus norvegicus</name>
    <name type="common">Rat</name>
    <dbReference type="NCBI Taxonomy" id="10116"/>
    <lineage>
        <taxon>Eukaryota</taxon>
        <taxon>Metazoa</taxon>
        <taxon>Chordata</taxon>
        <taxon>Craniata</taxon>
        <taxon>Vertebrata</taxon>
        <taxon>Euteleostomi</taxon>
        <taxon>Mammalia</taxon>
        <taxon>Eutheria</taxon>
        <taxon>Euarchontoglires</taxon>
        <taxon>Glires</taxon>
        <taxon>Rodentia</taxon>
        <taxon>Myomorpha</taxon>
        <taxon>Muroidea</taxon>
        <taxon>Muridae</taxon>
        <taxon>Murinae</taxon>
        <taxon>Rattus</taxon>
    </lineage>
</organism>